<reference key="1">
    <citation type="submission" date="2006-08" db="EMBL/GenBank/DDBJ databases">
        <title>Complete sequence of Maricaulis maris MCS10.</title>
        <authorList>
            <consortium name="US DOE Joint Genome Institute"/>
            <person name="Copeland A."/>
            <person name="Lucas S."/>
            <person name="Lapidus A."/>
            <person name="Barry K."/>
            <person name="Detter J.C."/>
            <person name="Glavina del Rio T."/>
            <person name="Hammon N."/>
            <person name="Israni S."/>
            <person name="Dalin E."/>
            <person name="Tice H."/>
            <person name="Pitluck S."/>
            <person name="Saunders E."/>
            <person name="Brettin T."/>
            <person name="Bruce D."/>
            <person name="Han C."/>
            <person name="Tapia R."/>
            <person name="Gilna P."/>
            <person name="Schmutz J."/>
            <person name="Larimer F."/>
            <person name="Land M."/>
            <person name="Hauser L."/>
            <person name="Kyrpides N."/>
            <person name="Mikhailova N."/>
            <person name="Viollier P."/>
            <person name="Stephens C."/>
            <person name="Richardson P."/>
        </authorList>
    </citation>
    <scope>NUCLEOTIDE SEQUENCE [LARGE SCALE GENOMIC DNA]</scope>
    <source>
        <strain>MCS10</strain>
    </source>
</reference>
<keyword id="KW-0378">Hydrolase</keyword>
<keyword id="KW-0460">Magnesium</keyword>
<keyword id="KW-0479">Metal-binding</keyword>
<keyword id="KW-0546">Nucleotide metabolism</keyword>
<keyword id="KW-1185">Reference proteome</keyword>
<accession>Q0AK44</accession>
<protein>
    <recommendedName>
        <fullName evidence="1">Deoxyuridine 5'-triphosphate nucleotidohydrolase</fullName>
        <shortName evidence="1">dUTPase</shortName>
        <ecNumber evidence="1">3.6.1.23</ecNumber>
    </recommendedName>
    <alternativeName>
        <fullName evidence="1">dUTP pyrophosphatase</fullName>
    </alternativeName>
</protein>
<gene>
    <name evidence="1" type="primary">dut</name>
    <name type="ordered locus">Mmar10_3068</name>
</gene>
<evidence type="ECO:0000255" key="1">
    <source>
        <dbReference type="HAMAP-Rule" id="MF_00116"/>
    </source>
</evidence>
<organism>
    <name type="scientific">Maricaulis maris (strain MCS10)</name>
    <name type="common">Caulobacter maris</name>
    <dbReference type="NCBI Taxonomy" id="394221"/>
    <lineage>
        <taxon>Bacteria</taxon>
        <taxon>Pseudomonadati</taxon>
        <taxon>Pseudomonadota</taxon>
        <taxon>Alphaproteobacteria</taxon>
        <taxon>Maricaulales</taxon>
        <taxon>Maricaulaceae</taxon>
        <taxon>Maricaulis</taxon>
    </lineage>
</organism>
<comment type="function">
    <text evidence="1">This enzyme is involved in nucleotide metabolism: it produces dUMP, the immediate precursor of thymidine nucleotides and it decreases the intracellular concentration of dUTP so that uracil cannot be incorporated into DNA.</text>
</comment>
<comment type="catalytic activity">
    <reaction evidence="1">
        <text>dUTP + H2O = dUMP + diphosphate + H(+)</text>
        <dbReference type="Rhea" id="RHEA:10248"/>
        <dbReference type="ChEBI" id="CHEBI:15377"/>
        <dbReference type="ChEBI" id="CHEBI:15378"/>
        <dbReference type="ChEBI" id="CHEBI:33019"/>
        <dbReference type="ChEBI" id="CHEBI:61555"/>
        <dbReference type="ChEBI" id="CHEBI:246422"/>
        <dbReference type="EC" id="3.6.1.23"/>
    </reaction>
</comment>
<comment type="cofactor">
    <cofactor evidence="1">
        <name>Mg(2+)</name>
        <dbReference type="ChEBI" id="CHEBI:18420"/>
    </cofactor>
</comment>
<comment type="pathway">
    <text evidence="1">Pyrimidine metabolism; dUMP biosynthesis; dUMP from dCTP (dUTP route): step 2/2.</text>
</comment>
<comment type="similarity">
    <text evidence="1">Belongs to the dUTPase family.</text>
</comment>
<dbReference type="EC" id="3.6.1.23" evidence="1"/>
<dbReference type="EMBL" id="CP000449">
    <property type="protein sequence ID" value="ABI67349.1"/>
    <property type="molecule type" value="Genomic_DNA"/>
</dbReference>
<dbReference type="RefSeq" id="WP_011644993.1">
    <property type="nucleotide sequence ID" value="NC_008347.1"/>
</dbReference>
<dbReference type="SMR" id="Q0AK44"/>
<dbReference type="STRING" id="394221.Mmar10_3068"/>
<dbReference type="KEGG" id="mmr:Mmar10_3068"/>
<dbReference type="eggNOG" id="COG0756">
    <property type="taxonomic scope" value="Bacteria"/>
</dbReference>
<dbReference type="HOGENOM" id="CLU_068508_1_2_5"/>
<dbReference type="OrthoDB" id="9809956at2"/>
<dbReference type="UniPathway" id="UPA00610">
    <property type="reaction ID" value="UER00666"/>
</dbReference>
<dbReference type="Proteomes" id="UP000001964">
    <property type="component" value="Chromosome"/>
</dbReference>
<dbReference type="GO" id="GO:0004170">
    <property type="term" value="F:dUTP diphosphatase activity"/>
    <property type="evidence" value="ECO:0007669"/>
    <property type="project" value="UniProtKB-UniRule"/>
</dbReference>
<dbReference type="GO" id="GO:0000287">
    <property type="term" value="F:magnesium ion binding"/>
    <property type="evidence" value="ECO:0007669"/>
    <property type="project" value="UniProtKB-UniRule"/>
</dbReference>
<dbReference type="GO" id="GO:0006226">
    <property type="term" value="P:dUMP biosynthetic process"/>
    <property type="evidence" value="ECO:0007669"/>
    <property type="project" value="UniProtKB-UniRule"/>
</dbReference>
<dbReference type="GO" id="GO:0046081">
    <property type="term" value="P:dUTP catabolic process"/>
    <property type="evidence" value="ECO:0007669"/>
    <property type="project" value="InterPro"/>
</dbReference>
<dbReference type="CDD" id="cd07557">
    <property type="entry name" value="trimeric_dUTPase"/>
    <property type="match status" value="1"/>
</dbReference>
<dbReference type="FunFam" id="2.70.40.10:FF:000002">
    <property type="entry name" value="dUTP diphosphatase"/>
    <property type="match status" value="1"/>
</dbReference>
<dbReference type="Gene3D" id="2.70.40.10">
    <property type="match status" value="1"/>
</dbReference>
<dbReference type="HAMAP" id="MF_00116">
    <property type="entry name" value="dUTPase_bact"/>
    <property type="match status" value="1"/>
</dbReference>
<dbReference type="InterPro" id="IPR008181">
    <property type="entry name" value="dUTPase"/>
</dbReference>
<dbReference type="InterPro" id="IPR029054">
    <property type="entry name" value="dUTPase-like"/>
</dbReference>
<dbReference type="InterPro" id="IPR036157">
    <property type="entry name" value="dUTPase-like_sf"/>
</dbReference>
<dbReference type="InterPro" id="IPR033704">
    <property type="entry name" value="dUTPase_trimeric"/>
</dbReference>
<dbReference type="NCBIfam" id="TIGR00576">
    <property type="entry name" value="dut"/>
    <property type="match status" value="1"/>
</dbReference>
<dbReference type="NCBIfam" id="NF001862">
    <property type="entry name" value="PRK00601.1"/>
    <property type="match status" value="1"/>
</dbReference>
<dbReference type="PANTHER" id="PTHR11241">
    <property type="entry name" value="DEOXYURIDINE 5'-TRIPHOSPHATE NUCLEOTIDOHYDROLASE"/>
    <property type="match status" value="1"/>
</dbReference>
<dbReference type="PANTHER" id="PTHR11241:SF0">
    <property type="entry name" value="DEOXYURIDINE 5'-TRIPHOSPHATE NUCLEOTIDOHYDROLASE"/>
    <property type="match status" value="1"/>
</dbReference>
<dbReference type="Pfam" id="PF00692">
    <property type="entry name" value="dUTPase"/>
    <property type="match status" value="1"/>
</dbReference>
<dbReference type="SUPFAM" id="SSF51283">
    <property type="entry name" value="dUTPase-like"/>
    <property type="match status" value="1"/>
</dbReference>
<sequence length="152" mass="16067">MSTVPVKIKPLDHYEGLALPAYETPQSAGMDLRAAVPADEPVSIPPGEWRLIPVGIAIALPAGFEAQVRPRSGLAAKHGISCVNTPGTVDADYRGEIRVNLINHGQANFVVNRGDRIAQMIIAPVTQAVWEIADTLDETTRGTGGFGSTGTK</sequence>
<name>DUT_MARMM</name>
<proteinExistence type="inferred from homology"/>
<feature type="chain" id="PRO_1000015481" description="Deoxyuridine 5'-triphosphate nucleotidohydrolase">
    <location>
        <begin position="1"/>
        <end position="152"/>
    </location>
</feature>
<feature type="binding site" evidence="1">
    <location>
        <begin position="71"/>
        <end position="73"/>
    </location>
    <ligand>
        <name>substrate</name>
    </ligand>
</feature>
<feature type="binding site" evidence="1">
    <location>
        <position position="84"/>
    </location>
    <ligand>
        <name>substrate</name>
    </ligand>
</feature>
<feature type="binding site" evidence="1">
    <location>
        <begin position="88"/>
        <end position="90"/>
    </location>
    <ligand>
        <name>substrate</name>
    </ligand>
</feature>